<reference key="1">
    <citation type="journal article" date="2003" name="Plant Cell Physiol.">
        <title>A new 9-lipoxygenase cDNA from developing rice seeds.</title>
        <authorList>
            <person name="Mizuno K."/>
            <person name="Iida T."/>
            <person name="Takano A."/>
            <person name="Yokoyama M."/>
            <person name="Fujimura T."/>
        </authorList>
    </citation>
    <scope>NUCLEOTIDE SEQUENCE [MRNA]</scope>
    <scope>FUNCTION</scope>
    <scope>DEVELOPMENTAL STAGE</scope>
</reference>
<reference key="2">
    <citation type="journal article" date="2005" name="Genome Res.">
        <title>Sequence, annotation, and analysis of synteny between rice chromosome 3 and diverged grass species.</title>
        <authorList>
            <consortium name="The rice chromosome 3 sequencing consortium"/>
            <person name="Buell C.R."/>
            <person name="Yuan Q."/>
            <person name="Ouyang S."/>
            <person name="Liu J."/>
            <person name="Zhu W."/>
            <person name="Wang A."/>
            <person name="Maiti R."/>
            <person name="Haas B."/>
            <person name="Wortman J."/>
            <person name="Pertea M."/>
            <person name="Jones K.M."/>
            <person name="Kim M."/>
            <person name="Overton L."/>
            <person name="Tsitrin T."/>
            <person name="Fadrosh D."/>
            <person name="Bera J."/>
            <person name="Weaver B."/>
            <person name="Jin S."/>
            <person name="Johri S."/>
            <person name="Reardon M."/>
            <person name="Webb K."/>
            <person name="Hill J."/>
            <person name="Moffat K."/>
            <person name="Tallon L."/>
            <person name="Van Aken S."/>
            <person name="Lewis M."/>
            <person name="Utterback T."/>
            <person name="Feldblyum T."/>
            <person name="Zismann V."/>
            <person name="Iobst S."/>
            <person name="Hsiao J."/>
            <person name="de Vazeille A.R."/>
            <person name="Salzberg S.L."/>
            <person name="White O."/>
            <person name="Fraser C.M."/>
            <person name="Yu Y."/>
            <person name="Kim H."/>
            <person name="Rambo T."/>
            <person name="Currie J."/>
            <person name="Collura K."/>
            <person name="Kernodle-Thompson S."/>
            <person name="Wei F."/>
            <person name="Kudrna K."/>
            <person name="Ammiraju J.S.S."/>
            <person name="Luo M."/>
            <person name="Goicoechea J.L."/>
            <person name="Wing R.A."/>
            <person name="Henry D."/>
            <person name="Oates R."/>
            <person name="Palmer M."/>
            <person name="Pries G."/>
            <person name="Saski C."/>
            <person name="Simmons J."/>
            <person name="Soderlund C."/>
            <person name="Nelson W."/>
            <person name="de la Bastide M."/>
            <person name="Spiegel L."/>
            <person name="Nascimento L."/>
            <person name="Huang E."/>
            <person name="Preston R."/>
            <person name="Zutavern T."/>
            <person name="Palmer L."/>
            <person name="O'Shaughnessy A."/>
            <person name="Dike S."/>
            <person name="McCombie W.R."/>
            <person name="Minx P."/>
            <person name="Cordum H."/>
            <person name="Wilson R."/>
            <person name="Jin W."/>
            <person name="Lee H.R."/>
            <person name="Jiang J."/>
            <person name="Jackson S."/>
        </authorList>
    </citation>
    <scope>NUCLEOTIDE SEQUENCE [LARGE SCALE GENOMIC DNA]</scope>
    <source>
        <strain>cv. Nipponbare</strain>
    </source>
</reference>
<reference key="3">
    <citation type="journal article" date="2005" name="Nature">
        <title>The map-based sequence of the rice genome.</title>
        <authorList>
            <consortium name="International rice genome sequencing project (IRGSP)"/>
        </authorList>
    </citation>
    <scope>NUCLEOTIDE SEQUENCE [LARGE SCALE GENOMIC DNA]</scope>
    <source>
        <strain>cv. Nipponbare</strain>
    </source>
</reference>
<reference key="4">
    <citation type="journal article" date="2008" name="Nucleic Acids Res.">
        <title>The rice annotation project database (RAP-DB): 2008 update.</title>
        <authorList>
            <consortium name="The rice annotation project (RAP)"/>
        </authorList>
    </citation>
    <scope>GENOME REANNOTATION</scope>
    <source>
        <strain>cv. Nipponbare</strain>
    </source>
</reference>
<reference key="5">
    <citation type="journal article" date="2013" name="Rice">
        <title>Improvement of the Oryza sativa Nipponbare reference genome using next generation sequence and optical map data.</title>
        <authorList>
            <person name="Kawahara Y."/>
            <person name="de la Bastide M."/>
            <person name="Hamilton J.P."/>
            <person name="Kanamori H."/>
            <person name="McCombie W.R."/>
            <person name="Ouyang S."/>
            <person name="Schwartz D.C."/>
            <person name="Tanaka T."/>
            <person name="Wu J."/>
            <person name="Zhou S."/>
            <person name="Childs K.L."/>
            <person name="Davidson R.M."/>
            <person name="Lin H."/>
            <person name="Quesada-Ocampo L."/>
            <person name="Vaillancourt B."/>
            <person name="Sakai H."/>
            <person name="Lee S.S."/>
            <person name="Kim J."/>
            <person name="Numa H."/>
            <person name="Itoh T."/>
            <person name="Buell C.R."/>
            <person name="Matsumoto T."/>
        </authorList>
    </citation>
    <scope>GENOME REANNOTATION</scope>
    <source>
        <strain>cv. Nipponbare</strain>
    </source>
</reference>
<reference key="6">
    <citation type="journal article" date="2003" name="Science">
        <title>Collection, mapping, and annotation of over 28,000 cDNA clones from japonica rice.</title>
        <authorList>
            <consortium name="The rice full-length cDNA consortium"/>
        </authorList>
    </citation>
    <scope>NUCLEOTIDE SEQUENCE [LARGE SCALE MRNA]</scope>
    <source>
        <strain>cv. Nipponbare</strain>
    </source>
</reference>
<feature type="chain" id="PRO_0000220707" description="Linoleate 9S-lipoxygenase 1">
    <location>
        <begin position="1"/>
        <end position="863"/>
    </location>
</feature>
<feature type="domain" description="PLAT" evidence="2">
    <location>
        <begin position="32"/>
        <end position="158"/>
    </location>
</feature>
<feature type="domain" description="Lipoxygenase" evidence="3">
    <location>
        <begin position="161"/>
        <end position="863"/>
    </location>
</feature>
<feature type="region of interest" description="Disordered" evidence="4">
    <location>
        <begin position="204"/>
        <end position="244"/>
    </location>
</feature>
<feature type="binding site" evidence="3">
    <location>
        <position position="518"/>
    </location>
    <ligand>
        <name>Fe cation</name>
        <dbReference type="ChEBI" id="CHEBI:24875"/>
        <note>catalytic</note>
    </ligand>
</feature>
<feature type="binding site" evidence="3">
    <location>
        <position position="523"/>
    </location>
    <ligand>
        <name>Fe cation</name>
        <dbReference type="ChEBI" id="CHEBI:24875"/>
        <note>catalytic</note>
    </ligand>
</feature>
<feature type="binding site" evidence="3">
    <location>
        <position position="709"/>
    </location>
    <ligand>
        <name>Fe cation</name>
        <dbReference type="ChEBI" id="CHEBI:24875"/>
        <note>catalytic</note>
    </ligand>
</feature>
<feature type="binding site" evidence="3">
    <location>
        <position position="713"/>
    </location>
    <ligand>
        <name>Fe cation</name>
        <dbReference type="ChEBI" id="CHEBI:24875"/>
        <note>catalytic</note>
    </ligand>
</feature>
<feature type="binding site" evidence="3">
    <location>
        <position position="863"/>
    </location>
    <ligand>
        <name>Fe cation</name>
        <dbReference type="ChEBI" id="CHEBI:24875"/>
        <note>catalytic</note>
    </ligand>
</feature>
<feature type="sequence conflict" description="In Ref. 1; BAD02945." evidence="6" ref="1">
    <original>N</original>
    <variation>I</variation>
    <location>
        <position position="160"/>
    </location>
</feature>
<feature type="sequence conflict" description="In Ref. 1; BAD02945." evidence="6" ref="1">
    <original>L</original>
    <variation>P</variation>
    <location>
        <position position="163"/>
    </location>
</feature>
<feature type="sequence conflict" description="In Ref. 1; BAD02945." evidence="6" ref="1">
    <original>H</original>
    <variation>R</variation>
    <location>
        <position position="513"/>
    </location>
</feature>
<feature type="sequence conflict" description="In Ref. 1; BAD02945." evidence="6" ref="1">
    <original>E</original>
    <variation>K</variation>
    <location>
        <position position="527"/>
    </location>
</feature>
<feature type="sequence conflict" description="In Ref. 1; BAD02945." evidence="6" ref="1">
    <original>T</original>
    <variation>A</variation>
    <location>
        <position position="596"/>
    </location>
</feature>
<feature type="sequence conflict" description="In Ref. 1; BAD02945." evidence="6" ref="1">
    <original>E</original>
    <variation>A</variation>
    <location>
        <position position="663"/>
    </location>
</feature>
<sequence>MLGGLKDKLTGKNGNKIKGLAVLMSRKLLDPRDFTASLLDNVHEVFGNSITCQLVSATVADQNNEGRGIVGSEANLEQGLTDLPSVSQGESKLTVRFNWEMDKHGVPGAIIIKNHHSTKFFLKTITLHDVPGCDTIVFVANSWIYPVGKYHYNRIFFANNSYLPSQMPEALRPYREDELRYLRGEDRQGPYQEHDRIYRYDVYNDLGEPDRDNPRPVLGGSQKHPYPRRGRTGRIPTKKDPNSESRLSLLEQIYVPSDERFAHLKMSDFAGYSIKAIVQGILPAIRTYVDLTPGEFDSFEDILKLYRGGLKLPSIPALEELRKSFPVQLIKDLLPVGGSYLLKFPKPDIIKENEVAWRTDEEFAREILAGLNPMVIRRLTEFPPKSTLDPSKYGDQTSTITPAHIEKNLEGLSVQQALDSNRLYILDHHDHFMPFLIDINSLDGIFTYATRTLLFLRDDDTLKPLAIELSLPHIEGNLTSAKSKVHTPASSGIESWVWQLAKAYVAVNDSGWHQLISHWLNTHAVMEPFVIATNRQLSVTHPVYKLLQPHYRDTMTINALARQTLINGGGIFEQTVFPGKHALAMSSAVYKNWNFTEQGLPDDLIKRGIAIKDPSSPSKVKLLIKDYPYATDGLAIWQAIEQWVTEYCAIYYPNDGVLQGDVELQAWWKEVREVGHGDLKDADWWPKMQSLPELTKACTTIIWIASALHAAVNFGQYPYAGYLPNRPTISRRPMPEPGSKEYTELDENPEKFFIRTITSQFQTILGVSLIEILSKHSADEIYLGQRDTPEWTSDPKALEAFKRFSRQLVEIESKVLNMNKDPLLKNRVGPANFPYTLMFPNTSDNKGAAEGITARGIPNSISI</sequence>
<accession>Q76I22</accession>
<accession>Q10EI8</accession>
<accession>Q7G786</accession>
<dbReference type="EC" id="1.13.11.58"/>
<dbReference type="EMBL" id="AB099850">
    <property type="protein sequence ID" value="BAD02945.1"/>
    <property type="molecule type" value="mRNA"/>
</dbReference>
<dbReference type="EMBL" id="AC093017">
    <property type="protein sequence ID" value="AAX95631.1"/>
    <property type="molecule type" value="Genomic_DNA"/>
</dbReference>
<dbReference type="EMBL" id="AC097368">
    <property type="protein sequence ID" value="AAO38440.1"/>
    <property type="molecule type" value="Genomic_DNA"/>
</dbReference>
<dbReference type="EMBL" id="DP000009">
    <property type="protein sequence ID" value="ABF98382.1"/>
    <property type="molecule type" value="Genomic_DNA"/>
</dbReference>
<dbReference type="EMBL" id="AP008209">
    <property type="protein sequence ID" value="BAF12904.1"/>
    <property type="molecule type" value="Genomic_DNA"/>
</dbReference>
<dbReference type="EMBL" id="AP014959">
    <property type="protein sequence ID" value="BAS85907.1"/>
    <property type="molecule type" value="Genomic_DNA"/>
</dbReference>
<dbReference type="EMBL" id="AK103565">
    <property type="protein sequence ID" value="BAG96145.1"/>
    <property type="molecule type" value="mRNA"/>
</dbReference>
<dbReference type="RefSeq" id="XP_015632769.1">
    <property type="nucleotide sequence ID" value="XM_015777283.1"/>
</dbReference>
<dbReference type="SMR" id="Q76I22"/>
<dbReference type="FunCoup" id="Q76I22">
    <property type="interactions" value="404"/>
</dbReference>
<dbReference type="STRING" id="39947.Q76I22"/>
<dbReference type="PaxDb" id="39947-Q76I22"/>
<dbReference type="EnsemblPlants" id="Os03t0699700-01">
    <property type="protein sequence ID" value="Os03t0699700-01"/>
    <property type="gene ID" value="Os03g0699700"/>
</dbReference>
<dbReference type="Gramene" id="Os03t0699700-01">
    <property type="protein sequence ID" value="Os03t0699700-01"/>
    <property type="gene ID" value="Os03g0699700"/>
</dbReference>
<dbReference type="KEGG" id="dosa:Os03g0699700"/>
<dbReference type="eggNOG" id="ENOG502QQSP">
    <property type="taxonomic scope" value="Eukaryota"/>
</dbReference>
<dbReference type="HOGENOM" id="CLU_004282_0_0_1"/>
<dbReference type="InParanoid" id="Q76I22"/>
<dbReference type="OMA" id="TESWVWQ"/>
<dbReference type="OrthoDB" id="407298at2759"/>
<dbReference type="BioCyc" id="MetaCyc:MONOMER-12733"/>
<dbReference type="BRENDA" id="1.13.11.58">
    <property type="organism ID" value="4460"/>
</dbReference>
<dbReference type="UniPathway" id="UPA00382"/>
<dbReference type="Proteomes" id="UP000000763">
    <property type="component" value="Chromosome 3"/>
</dbReference>
<dbReference type="Proteomes" id="UP000059680">
    <property type="component" value="Chromosome 3"/>
</dbReference>
<dbReference type="GO" id="GO:0005737">
    <property type="term" value="C:cytoplasm"/>
    <property type="evidence" value="ECO:0007669"/>
    <property type="project" value="UniProtKB-SubCell"/>
</dbReference>
<dbReference type="GO" id="GO:1990136">
    <property type="term" value="F:linoleate 9S-lipoxygenase activity"/>
    <property type="evidence" value="ECO:0007669"/>
    <property type="project" value="UniProtKB-EC"/>
</dbReference>
<dbReference type="GO" id="GO:0046872">
    <property type="term" value="F:metal ion binding"/>
    <property type="evidence" value="ECO:0007669"/>
    <property type="project" value="UniProtKB-KW"/>
</dbReference>
<dbReference type="GO" id="GO:0016702">
    <property type="term" value="F:oxidoreductase activity, acting on single donors with incorporation of molecular oxygen, incorporation of two atoms of oxygen"/>
    <property type="evidence" value="ECO:0000318"/>
    <property type="project" value="GO_Central"/>
</dbReference>
<dbReference type="GO" id="GO:0006633">
    <property type="term" value="P:fatty acid biosynthetic process"/>
    <property type="evidence" value="ECO:0007669"/>
    <property type="project" value="UniProtKB-KW"/>
</dbReference>
<dbReference type="GO" id="GO:0034440">
    <property type="term" value="P:lipid oxidation"/>
    <property type="evidence" value="ECO:0000318"/>
    <property type="project" value="GO_Central"/>
</dbReference>
<dbReference type="GO" id="GO:0031408">
    <property type="term" value="P:oxylipin biosynthetic process"/>
    <property type="evidence" value="ECO:0007669"/>
    <property type="project" value="UniProtKB-UniPathway"/>
</dbReference>
<dbReference type="FunFam" id="1.20.245.10:FF:000002">
    <property type="entry name" value="Lipoxygenase"/>
    <property type="match status" value="1"/>
</dbReference>
<dbReference type="FunFam" id="3.10.450.60:FF:000002">
    <property type="entry name" value="Lipoxygenase"/>
    <property type="match status" value="1"/>
</dbReference>
<dbReference type="FunFam" id="4.10.372.10:FF:000001">
    <property type="entry name" value="Lipoxygenase"/>
    <property type="match status" value="1"/>
</dbReference>
<dbReference type="FunFam" id="4.10.375.10:FF:000001">
    <property type="entry name" value="Lipoxygenase"/>
    <property type="match status" value="1"/>
</dbReference>
<dbReference type="Gene3D" id="3.10.450.60">
    <property type="match status" value="1"/>
</dbReference>
<dbReference type="Gene3D" id="4.10.375.10">
    <property type="entry name" value="Lipoxygenase-1, Domain 2"/>
    <property type="match status" value="1"/>
</dbReference>
<dbReference type="Gene3D" id="4.10.372.10">
    <property type="entry name" value="Lipoxygenase-1, Domain 3"/>
    <property type="match status" value="1"/>
</dbReference>
<dbReference type="Gene3D" id="1.20.245.10">
    <property type="entry name" value="Lipoxygenase-1, Domain 5"/>
    <property type="match status" value="1"/>
</dbReference>
<dbReference type="Gene3D" id="2.60.60.20">
    <property type="entry name" value="PLAT/LH2 domain"/>
    <property type="match status" value="1"/>
</dbReference>
<dbReference type="InterPro" id="IPR000907">
    <property type="entry name" value="LipOase"/>
</dbReference>
<dbReference type="InterPro" id="IPR013819">
    <property type="entry name" value="LipOase_C"/>
</dbReference>
<dbReference type="InterPro" id="IPR036226">
    <property type="entry name" value="LipOase_C_sf"/>
</dbReference>
<dbReference type="InterPro" id="IPR020834">
    <property type="entry name" value="LipOase_CS"/>
</dbReference>
<dbReference type="InterPro" id="IPR020833">
    <property type="entry name" value="LipOase_Fe_BS"/>
</dbReference>
<dbReference type="InterPro" id="IPR001246">
    <property type="entry name" value="LipOase_plant"/>
</dbReference>
<dbReference type="InterPro" id="IPR027433">
    <property type="entry name" value="Lipoxygenase_dom_3"/>
</dbReference>
<dbReference type="InterPro" id="IPR001024">
    <property type="entry name" value="PLAT/LH2_dom"/>
</dbReference>
<dbReference type="InterPro" id="IPR036392">
    <property type="entry name" value="PLAT/LH2_dom_sf"/>
</dbReference>
<dbReference type="PANTHER" id="PTHR11771">
    <property type="entry name" value="LIPOXYGENASE"/>
    <property type="match status" value="1"/>
</dbReference>
<dbReference type="Pfam" id="PF00305">
    <property type="entry name" value="Lipoxygenase"/>
    <property type="match status" value="1"/>
</dbReference>
<dbReference type="Pfam" id="PF01477">
    <property type="entry name" value="PLAT"/>
    <property type="match status" value="1"/>
</dbReference>
<dbReference type="PRINTS" id="PR00087">
    <property type="entry name" value="LIPOXYGENASE"/>
</dbReference>
<dbReference type="PRINTS" id="PR00468">
    <property type="entry name" value="PLTLPOXGNASE"/>
</dbReference>
<dbReference type="SMART" id="SM00308">
    <property type="entry name" value="LH2"/>
    <property type="match status" value="1"/>
</dbReference>
<dbReference type="SUPFAM" id="SSF49723">
    <property type="entry name" value="Lipase/lipooxygenase domain (PLAT/LH2 domain)"/>
    <property type="match status" value="1"/>
</dbReference>
<dbReference type="SUPFAM" id="SSF48484">
    <property type="entry name" value="Lipoxigenase"/>
    <property type="match status" value="1"/>
</dbReference>
<dbReference type="PROSITE" id="PS00711">
    <property type="entry name" value="LIPOXYGENASE_1"/>
    <property type="match status" value="1"/>
</dbReference>
<dbReference type="PROSITE" id="PS00081">
    <property type="entry name" value="LIPOXYGENASE_2"/>
    <property type="match status" value="1"/>
</dbReference>
<dbReference type="PROSITE" id="PS51393">
    <property type="entry name" value="LIPOXYGENASE_3"/>
    <property type="match status" value="1"/>
</dbReference>
<dbReference type="PROSITE" id="PS50095">
    <property type="entry name" value="PLAT"/>
    <property type="match status" value="1"/>
</dbReference>
<organism>
    <name type="scientific">Oryza sativa subsp. japonica</name>
    <name type="common">Rice</name>
    <dbReference type="NCBI Taxonomy" id="39947"/>
    <lineage>
        <taxon>Eukaryota</taxon>
        <taxon>Viridiplantae</taxon>
        <taxon>Streptophyta</taxon>
        <taxon>Embryophyta</taxon>
        <taxon>Tracheophyta</taxon>
        <taxon>Spermatophyta</taxon>
        <taxon>Magnoliopsida</taxon>
        <taxon>Liliopsida</taxon>
        <taxon>Poales</taxon>
        <taxon>Poaceae</taxon>
        <taxon>BOP clade</taxon>
        <taxon>Oryzoideae</taxon>
        <taxon>Oryzeae</taxon>
        <taxon>Oryzinae</taxon>
        <taxon>Oryza</taxon>
        <taxon>Oryza sativa</taxon>
    </lineage>
</organism>
<keyword id="KW-0963">Cytoplasm</keyword>
<keyword id="KW-0223">Dioxygenase</keyword>
<keyword id="KW-0275">Fatty acid biosynthesis</keyword>
<keyword id="KW-0276">Fatty acid metabolism</keyword>
<keyword id="KW-0408">Iron</keyword>
<keyword id="KW-0444">Lipid biosynthesis</keyword>
<keyword id="KW-0443">Lipid metabolism</keyword>
<keyword id="KW-0479">Metal-binding</keyword>
<keyword id="KW-0560">Oxidoreductase</keyword>
<keyword id="KW-0925">Oxylipin biosynthesis</keyword>
<keyword id="KW-1185">Reference proteome</keyword>
<gene>
    <name type="ordered locus">Os03g0699700</name>
    <name type="ordered locus">LOC_Os03g49260</name>
    <name type="ORF">OSJNBb0017F17.10</name>
</gene>
<comment type="function">
    <text evidence="5">Plant lipoxygenase may be involved in a number of diverse aspects of plant physiology including growth and development, pest resistance, and senescence or responses to wounding. This lipoxygenase introduces molecular oxygen exclusively into the C-9 position of linoleic and linolenic.</text>
</comment>
<comment type="catalytic activity">
    <reaction>
        <text>(9Z,12Z)-octadecadienoate + O2 = (9S)-hydroperoxy-(10E,12Z)-octadecadienoate</text>
        <dbReference type="Rhea" id="RHEA:30291"/>
        <dbReference type="ChEBI" id="CHEBI:15379"/>
        <dbReference type="ChEBI" id="CHEBI:30245"/>
        <dbReference type="ChEBI" id="CHEBI:60955"/>
        <dbReference type="EC" id="1.13.11.58"/>
    </reaction>
</comment>
<comment type="cofactor">
    <cofactor evidence="3">
        <name>Fe cation</name>
        <dbReference type="ChEBI" id="CHEBI:24875"/>
    </cofactor>
    <text evidence="3">Binds 1 Fe cation per subunit. Iron is tightly bound.</text>
</comment>
<comment type="pathway">
    <text evidence="3">Lipid metabolism; oxylipin biosynthesis.</text>
</comment>
<comment type="subunit">
    <text evidence="1">Monomer.</text>
</comment>
<comment type="subcellular location">
    <subcellularLocation>
        <location evidence="3">Cytoplasm</location>
    </subcellularLocation>
</comment>
<comment type="developmental stage">
    <text evidence="5">Expressed in the embryo 1 day after imbibition, and at low levels in developing seeds between 3 and 20 days after flowering.</text>
</comment>
<comment type="similarity">
    <text evidence="6">Belongs to the lipoxygenase family.</text>
</comment>
<proteinExistence type="evidence at transcript level"/>
<protein>
    <recommendedName>
        <fullName>Linoleate 9S-lipoxygenase 1</fullName>
        <ecNumber>1.13.11.58</ecNumber>
    </recommendedName>
    <alternativeName>
        <fullName>9-lipoxygenase</fullName>
    </alternativeName>
    <alternativeName>
        <fullName>Lipoxygenase 1</fullName>
    </alternativeName>
    <alternativeName>
        <fullName>r9-LOX1</fullName>
    </alternativeName>
</protein>
<evidence type="ECO:0000250" key="1"/>
<evidence type="ECO:0000255" key="2">
    <source>
        <dbReference type="PROSITE-ProRule" id="PRU00152"/>
    </source>
</evidence>
<evidence type="ECO:0000255" key="3">
    <source>
        <dbReference type="PROSITE-ProRule" id="PRU00726"/>
    </source>
</evidence>
<evidence type="ECO:0000256" key="4">
    <source>
        <dbReference type="SAM" id="MobiDB-lite"/>
    </source>
</evidence>
<evidence type="ECO:0000269" key="5">
    <source>
    </source>
</evidence>
<evidence type="ECO:0000305" key="6"/>
<name>LOX1_ORYSJ</name>